<organism>
    <name type="scientific">Mus musculus</name>
    <name type="common">Mouse</name>
    <dbReference type="NCBI Taxonomy" id="10090"/>
    <lineage>
        <taxon>Eukaryota</taxon>
        <taxon>Metazoa</taxon>
        <taxon>Chordata</taxon>
        <taxon>Craniata</taxon>
        <taxon>Vertebrata</taxon>
        <taxon>Euteleostomi</taxon>
        <taxon>Mammalia</taxon>
        <taxon>Eutheria</taxon>
        <taxon>Euarchontoglires</taxon>
        <taxon>Glires</taxon>
        <taxon>Rodentia</taxon>
        <taxon>Myomorpha</taxon>
        <taxon>Muroidea</taxon>
        <taxon>Muridae</taxon>
        <taxon>Murinae</taxon>
        <taxon>Mus</taxon>
        <taxon>Mus</taxon>
    </lineage>
</organism>
<protein>
    <recommendedName>
        <fullName>Secreted and transmembrane protein 1b</fullName>
    </recommendedName>
    <alternativeName>
        <fullName>Protein K-12</fullName>
    </alternativeName>
</protein>
<gene>
    <name type="primary">Sectm1b</name>
    <name type="synonym">K12</name>
    <name type="synonym">Sectm1</name>
</gene>
<sequence length="212" mass="23477">MLAYSVTSSGLFPRMLWALLLLAASLNAHNDVWDEPCCTEHEVSVNRGSRVVMACNISNNLRDVTIELVTSEKTSIIFNHTPPGNYSKDSWQLHIQGVQAQLVITDAQDKHSGNYSWKLHGFQAEFKNFNLTVNAADRQKTEDLPVTKVPDKPPTAVRTEVIIIIAIATTIIITGIGVFVWYKQFPVAPQIQMSVPCLIHGSPGIPYLTLPP</sequence>
<dbReference type="EMBL" id="AF210700">
    <property type="protein sequence ID" value="AAF30406.1"/>
    <property type="molecule type" value="mRNA"/>
</dbReference>
<dbReference type="EMBL" id="BC010805">
    <property type="protein sequence ID" value="AAH10805.1"/>
    <property type="molecule type" value="mRNA"/>
</dbReference>
<dbReference type="SMR" id="Q9JL59"/>
<dbReference type="FunCoup" id="Q9JL59">
    <property type="interactions" value="11"/>
</dbReference>
<dbReference type="STRING" id="10090.ENSMUSP00000045748"/>
<dbReference type="GlyCosmos" id="Q9JL59">
    <property type="glycosylation" value="4 sites, No reported glycans"/>
</dbReference>
<dbReference type="GlyGen" id="Q9JL59">
    <property type="glycosylation" value="4 sites"/>
</dbReference>
<dbReference type="iPTMnet" id="Q9JL59"/>
<dbReference type="PhosphoSitePlus" id="Q9JL59"/>
<dbReference type="PaxDb" id="10090-ENSMUSP00000045748"/>
<dbReference type="ProteomicsDB" id="255372"/>
<dbReference type="AGR" id="MGI:1929083"/>
<dbReference type="MGI" id="MGI:1929083">
    <property type="gene designation" value="Sectm1b"/>
</dbReference>
<dbReference type="eggNOG" id="ENOG502TM1B">
    <property type="taxonomic scope" value="Eukaryota"/>
</dbReference>
<dbReference type="InParanoid" id="Q9JL59"/>
<dbReference type="OrthoDB" id="9451016at2759"/>
<dbReference type="PhylomeDB" id="Q9JL59"/>
<dbReference type="PRO" id="PR:Q9JL59"/>
<dbReference type="Proteomes" id="UP000000589">
    <property type="component" value="Unplaced"/>
</dbReference>
<dbReference type="RNAct" id="Q9JL59">
    <property type="molecule type" value="protein"/>
</dbReference>
<dbReference type="GO" id="GO:0005576">
    <property type="term" value="C:extracellular region"/>
    <property type="evidence" value="ECO:0007669"/>
    <property type="project" value="UniProtKB-SubCell"/>
</dbReference>
<dbReference type="GO" id="GO:0005886">
    <property type="term" value="C:plasma membrane"/>
    <property type="evidence" value="ECO:0000250"/>
    <property type="project" value="MGI"/>
</dbReference>
<dbReference type="GO" id="GO:0005125">
    <property type="term" value="F:cytokine activity"/>
    <property type="evidence" value="ECO:0007669"/>
    <property type="project" value="InterPro"/>
</dbReference>
<dbReference type="GO" id="GO:0006955">
    <property type="term" value="P:immune response"/>
    <property type="evidence" value="ECO:0007669"/>
    <property type="project" value="InterPro"/>
</dbReference>
<dbReference type="FunFam" id="2.60.40.10:FF:002054">
    <property type="entry name" value="Secreted and transmembrane protein 1"/>
    <property type="match status" value="1"/>
</dbReference>
<dbReference type="Gene3D" id="2.60.40.10">
    <property type="entry name" value="Immunoglobulins"/>
    <property type="match status" value="1"/>
</dbReference>
<dbReference type="InterPro" id="IPR013783">
    <property type="entry name" value="Ig-like_fold"/>
</dbReference>
<dbReference type="InterPro" id="IPR033231">
    <property type="entry name" value="SECTM1"/>
</dbReference>
<dbReference type="PANTHER" id="PTHR15123">
    <property type="entry name" value="SECRETED AND TRANSMEMBRANE PROTEIN 1"/>
    <property type="match status" value="1"/>
</dbReference>
<dbReference type="PANTHER" id="PTHR15123:SF5">
    <property type="entry name" value="SECRETED AND TRANSMEMBRANE PROTEIN 1"/>
    <property type="match status" value="1"/>
</dbReference>
<accession>Q9JL59</accession>
<keyword id="KW-1003">Cell membrane</keyword>
<keyword id="KW-1015">Disulfide bond</keyword>
<keyword id="KW-0325">Glycoprotein</keyword>
<keyword id="KW-0472">Membrane</keyword>
<keyword id="KW-1185">Reference proteome</keyword>
<keyword id="KW-0964">Secreted</keyword>
<keyword id="KW-0732">Signal</keyword>
<keyword id="KW-0812">Transmembrane</keyword>
<keyword id="KW-1133">Transmembrane helix</keyword>
<comment type="function">
    <text evidence="1">May be involved in thymocyte signaling.</text>
</comment>
<comment type="subunit">
    <text evidence="3">Interacts with CD7.</text>
</comment>
<comment type="subcellular location">
    <subcellularLocation>
        <location evidence="5">Cell membrane</location>
        <topology evidence="5">Single-pass type I membrane protein</topology>
    </subcellularLocation>
    <subcellularLocation>
        <location evidence="1">Secreted</location>
    </subcellularLocation>
</comment>
<comment type="similarity">
    <text evidence="4">Belongs to the SECTM family.</text>
</comment>
<reference key="1">
    <citation type="journal article" date="2000" name="J. Biol. Chem.">
        <title>Identification of CD7 as a cognate of the human K12 (SECTM1) protein.</title>
        <authorList>
            <person name="Lyman S.D."/>
            <person name="Escobar S."/>
            <person name="Rousseau A.-M."/>
            <person name="Armstrong A."/>
            <person name="Fanslow W.C."/>
        </authorList>
    </citation>
    <scope>NUCLEOTIDE SEQUENCE [MRNA]</scope>
    <scope>INTERACTION WITH CD7</scope>
    <scope>SUBCELLULAR LOCATION</scope>
    <source>
        <tissue>Colon</tissue>
    </source>
</reference>
<reference key="2">
    <citation type="journal article" date="2004" name="Genome Res.">
        <title>The status, quality, and expansion of the NIH full-length cDNA project: the Mammalian Gene Collection (MGC).</title>
        <authorList>
            <consortium name="The MGC Project Team"/>
        </authorList>
    </citation>
    <scope>NUCLEOTIDE SEQUENCE [LARGE SCALE MRNA]</scope>
    <source>
        <tissue>Kidney</tissue>
    </source>
</reference>
<proteinExistence type="evidence at protein level"/>
<feature type="signal peptide" evidence="2">
    <location>
        <begin position="1"/>
        <end position="28"/>
    </location>
</feature>
<feature type="chain" id="PRO_0000022287" description="Secreted and transmembrane protein 1b">
    <location>
        <begin position="29"/>
        <end position="212"/>
    </location>
</feature>
<feature type="topological domain" description="Extracellular" evidence="2">
    <location>
        <begin position="29"/>
        <end position="160"/>
    </location>
</feature>
<feature type="transmembrane region" description="Helical" evidence="2">
    <location>
        <begin position="161"/>
        <end position="181"/>
    </location>
</feature>
<feature type="topological domain" description="Cytoplasmic" evidence="2">
    <location>
        <begin position="182"/>
        <end position="212"/>
    </location>
</feature>
<feature type="glycosylation site" description="N-linked (GlcNAc...) asparagine" evidence="2">
    <location>
        <position position="56"/>
    </location>
</feature>
<feature type="glycosylation site" description="N-linked (GlcNAc...) asparagine" evidence="2">
    <location>
        <position position="85"/>
    </location>
</feature>
<feature type="glycosylation site" description="N-linked (GlcNAc...) asparagine" evidence="2">
    <location>
        <position position="114"/>
    </location>
</feature>
<feature type="glycosylation site" description="N-linked (GlcNAc...) asparagine" evidence="2">
    <location>
        <position position="130"/>
    </location>
</feature>
<feature type="disulfide bond" evidence="2">
    <location>
        <begin position="38"/>
        <end position="55"/>
    </location>
</feature>
<name>SCT1B_MOUSE</name>
<evidence type="ECO:0000250" key="1"/>
<evidence type="ECO:0000255" key="2"/>
<evidence type="ECO:0000269" key="3">
    <source>
    </source>
</evidence>
<evidence type="ECO:0000305" key="4"/>
<evidence type="ECO:0000305" key="5">
    <source>
    </source>
</evidence>